<dbReference type="EMBL" id="AE000782">
    <property type="protein sequence ID" value="AAB90211.1"/>
    <property type="molecule type" value="Genomic_DNA"/>
</dbReference>
<dbReference type="PIR" id="H69378">
    <property type="entry name" value="H69378"/>
</dbReference>
<dbReference type="RefSeq" id="WP_010878532.1">
    <property type="nucleotide sequence ID" value="NC_000917.1"/>
</dbReference>
<dbReference type="SMR" id="O29230"/>
<dbReference type="STRING" id="224325.AF_1032"/>
<dbReference type="PaxDb" id="224325-AF_1032"/>
<dbReference type="EnsemblBacteria" id="AAB90211">
    <property type="protein sequence ID" value="AAB90211"/>
    <property type="gene ID" value="AF_1032"/>
</dbReference>
<dbReference type="GeneID" id="1484255"/>
<dbReference type="KEGG" id="afu:AF_1032"/>
<dbReference type="eggNOG" id="arCOG00368">
    <property type="taxonomic scope" value="Archaea"/>
</dbReference>
<dbReference type="HOGENOM" id="CLU_004785_0_2_2"/>
<dbReference type="OrthoDB" id="25344at2157"/>
<dbReference type="PhylomeDB" id="O29230"/>
<dbReference type="Proteomes" id="UP000002199">
    <property type="component" value="Chromosome"/>
</dbReference>
<dbReference type="GO" id="GO:0005524">
    <property type="term" value="F:ATP binding"/>
    <property type="evidence" value="ECO:0007669"/>
    <property type="project" value="UniProtKB-UniRule"/>
</dbReference>
<dbReference type="GO" id="GO:0016887">
    <property type="term" value="F:ATP hydrolysis activity"/>
    <property type="evidence" value="ECO:0007669"/>
    <property type="project" value="UniProtKB-UniRule"/>
</dbReference>
<dbReference type="GO" id="GO:0008270">
    <property type="term" value="F:zinc ion binding"/>
    <property type="evidence" value="ECO:0007669"/>
    <property type="project" value="UniProtKB-UniRule"/>
</dbReference>
<dbReference type="GO" id="GO:0006302">
    <property type="term" value="P:double-strand break repair"/>
    <property type="evidence" value="ECO:0007669"/>
    <property type="project" value="UniProtKB-UniRule"/>
</dbReference>
<dbReference type="Gene3D" id="6.10.250.70">
    <property type="match status" value="1"/>
</dbReference>
<dbReference type="Gene3D" id="1.10.287.510">
    <property type="entry name" value="Helix hairpin bin"/>
    <property type="match status" value="1"/>
</dbReference>
<dbReference type="Gene3D" id="3.40.50.300">
    <property type="entry name" value="P-loop containing nucleotide triphosphate hydrolases"/>
    <property type="match status" value="2"/>
</dbReference>
<dbReference type="HAMAP" id="MF_00449">
    <property type="entry name" value="RAD50"/>
    <property type="match status" value="1"/>
</dbReference>
<dbReference type="InterPro" id="IPR027417">
    <property type="entry name" value="P-loop_NTPase"/>
</dbReference>
<dbReference type="InterPro" id="IPR038729">
    <property type="entry name" value="Rad50/SbcC_AAA"/>
</dbReference>
<dbReference type="InterPro" id="IPR022982">
    <property type="entry name" value="Rad50_ATPase_archaeal"/>
</dbReference>
<dbReference type="InterPro" id="IPR013134">
    <property type="entry name" value="Zn_hook_RAD50"/>
</dbReference>
<dbReference type="NCBIfam" id="NF003034">
    <property type="entry name" value="PRK03918.1"/>
    <property type="match status" value="1"/>
</dbReference>
<dbReference type="PANTHER" id="PTHR32114">
    <property type="entry name" value="ABC TRANSPORTER ABCH.3"/>
    <property type="match status" value="1"/>
</dbReference>
<dbReference type="PANTHER" id="PTHR32114:SF2">
    <property type="entry name" value="ABC TRANSPORTER ABCH.3"/>
    <property type="match status" value="1"/>
</dbReference>
<dbReference type="Pfam" id="PF13476">
    <property type="entry name" value="AAA_23"/>
    <property type="match status" value="1"/>
</dbReference>
<dbReference type="Pfam" id="PF04423">
    <property type="entry name" value="Rad50_zn_hook"/>
    <property type="match status" value="1"/>
</dbReference>
<dbReference type="SUPFAM" id="SSF52540">
    <property type="entry name" value="P-loop containing nucleoside triphosphate hydrolases"/>
    <property type="match status" value="2"/>
</dbReference>
<dbReference type="SUPFAM" id="SSF75712">
    <property type="entry name" value="Rad50 coiled-coil Zn hook"/>
    <property type="match status" value="1"/>
</dbReference>
<dbReference type="PROSITE" id="PS51131">
    <property type="entry name" value="ZN_HOOK"/>
    <property type="match status" value="1"/>
</dbReference>
<comment type="function">
    <text evidence="1">Part of the Rad50/Mre11 complex, which is involved in the early steps of DNA double-strand break (DSB) repair. The complex may facilitate opening of the processed DNA ends to aid in the recruitment of HerA and NurA. Rad50 controls the balance between DNA end bridging and DNA resection via ATP-dependent structural rearrangements of the Rad50/Mre11 complex.</text>
</comment>
<comment type="cofactor">
    <cofactor evidence="1">
        <name>Zn(2+)</name>
        <dbReference type="ChEBI" id="CHEBI:29105"/>
    </cofactor>
    <text evidence="1">Binds 1 zinc ion per homodimer.</text>
</comment>
<comment type="subunit">
    <text evidence="1">Homodimer. Forms a heterotetramer composed of two Mre11 subunits and two Rad50 subunits.</text>
</comment>
<comment type="domain">
    <text evidence="1">The two conserved Cys that bind zinc constitute the zinc-hook, which separates the large intramolecular coiled coil regions. The 2 Cys residues coordinate one molecule of zinc with the help of the 2 Cys residues of the zinc-hook of another Rad50 molecule, thereby forming a V-shaped homodimer.</text>
</comment>
<comment type="similarity">
    <text evidence="1">Belongs to the SMC family. RAD50 subfamily.</text>
</comment>
<protein>
    <recommendedName>
        <fullName evidence="1">DNA double-strand break repair Rad50 ATPase</fullName>
    </recommendedName>
</protein>
<evidence type="ECO:0000255" key="1">
    <source>
        <dbReference type="HAMAP-Rule" id="MF_00449"/>
    </source>
</evidence>
<keyword id="KW-0067">ATP-binding</keyword>
<keyword id="KW-0175">Coiled coil</keyword>
<keyword id="KW-0227">DNA damage</keyword>
<keyword id="KW-0234">DNA repair</keyword>
<keyword id="KW-0378">Hydrolase</keyword>
<keyword id="KW-0479">Metal-binding</keyword>
<keyword id="KW-0547">Nucleotide-binding</keyword>
<keyword id="KW-1185">Reference proteome</keyword>
<keyword id="KW-0862">Zinc</keyword>
<feature type="chain" id="PRO_0000138650" description="DNA double-strand break repair Rad50 ATPase">
    <location>
        <begin position="1"/>
        <end position="886"/>
    </location>
</feature>
<feature type="domain" description="Zinc-hook" evidence="1">
    <location>
        <begin position="392"/>
        <end position="489"/>
    </location>
</feature>
<feature type="coiled-coil region" evidence="1">
    <location>
        <begin position="183"/>
        <end position="360"/>
    </location>
</feature>
<feature type="coiled-coil region" evidence="1">
    <location>
        <begin position="400"/>
        <end position="433"/>
    </location>
</feature>
<feature type="coiled-coil region" evidence="1">
    <location>
        <begin position="489"/>
        <end position="518"/>
    </location>
</feature>
<feature type="coiled-coil region" evidence="1">
    <location>
        <begin position="545"/>
        <end position="713"/>
    </location>
</feature>
<feature type="binding site" evidence="1">
    <location>
        <position position="13"/>
    </location>
    <ligand>
        <name>ATP</name>
        <dbReference type="ChEBI" id="CHEBI:30616"/>
    </ligand>
</feature>
<feature type="binding site" evidence="1">
    <location>
        <begin position="33"/>
        <end position="39"/>
    </location>
    <ligand>
        <name>ATP</name>
        <dbReference type="ChEBI" id="CHEBI:30616"/>
    </ligand>
</feature>
<feature type="binding site" evidence="1">
    <location>
        <position position="128"/>
    </location>
    <ligand>
        <name>ATP</name>
        <dbReference type="ChEBI" id="CHEBI:30616"/>
    </ligand>
</feature>
<feature type="binding site" evidence="1">
    <location>
        <position position="437"/>
    </location>
    <ligand>
        <name>Zn(2+)</name>
        <dbReference type="ChEBI" id="CHEBI:29105"/>
    </ligand>
</feature>
<feature type="binding site" evidence="1">
    <location>
        <position position="440"/>
    </location>
    <ligand>
        <name>Zn(2+)</name>
        <dbReference type="ChEBI" id="CHEBI:29105"/>
    </ligand>
</feature>
<feature type="binding site" evidence="1">
    <location>
        <begin position="792"/>
        <end position="797"/>
    </location>
    <ligand>
        <name>ATP</name>
        <dbReference type="ChEBI" id="CHEBI:30616"/>
    </ligand>
</feature>
<reference key="1">
    <citation type="journal article" date="1997" name="Nature">
        <title>The complete genome sequence of the hyperthermophilic, sulphate-reducing archaeon Archaeoglobus fulgidus.</title>
        <authorList>
            <person name="Klenk H.-P."/>
            <person name="Clayton R.A."/>
            <person name="Tomb J.-F."/>
            <person name="White O."/>
            <person name="Nelson K.E."/>
            <person name="Ketchum K.A."/>
            <person name="Dodson R.J."/>
            <person name="Gwinn M.L."/>
            <person name="Hickey E.K."/>
            <person name="Peterson J.D."/>
            <person name="Richardson D.L."/>
            <person name="Kerlavage A.R."/>
            <person name="Graham D.E."/>
            <person name="Kyrpides N.C."/>
            <person name="Fleischmann R.D."/>
            <person name="Quackenbush J."/>
            <person name="Lee N.H."/>
            <person name="Sutton G.G."/>
            <person name="Gill S.R."/>
            <person name="Kirkness E.F."/>
            <person name="Dougherty B.A."/>
            <person name="McKenney K."/>
            <person name="Adams M.D."/>
            <person name="Loftus B.J."/>
            <person name="Peterson S.N."/>
            <person name="Reich C.I."/>
            <person name="McNeil L.K."/>
            <person name="Badger J.H."/>
            <person name="Glodek A."/>
            <person name="Zhou L."/>
            <person name="Overbeek R."/>
            <person name="Gocayne J.D."/>
            <person name="Weidman J.F."/>
            <person name="McDonald L.A."/>
            <person name="Utterback T.R."/>
            <person name="Cotton M.D."/>
            <person name="Spriggs T."/>
            <person name="Artiach P."/>
            <person name="Kaine B.P."/>
            <person name="Sykes S.M."/>
            <person name="Sadow P.W."/>
            <person name="D'Andrea K.P."/>
            <person name="Bowman C."/>
            <person name="Fujii C."/>
            <person name="Garland S.A."/>
            <person name="Mason T.M."/>
            <person name="Olsen G.J."/>
            <person name="Fraser C.M."/>
            <person name="Smith H.O."/>
            <person name="Woese C.R."/>
            <person name="Venter J.C."/>
        </authorList>
    </citation>
    <scope>NUCLEOTIDE SEQUENCE [LARGE SCALE GENOMIC DNA]</scope>
    <source>
        <strain>ATCC 49558 / DSM 4304 / JCM 9628 / NBRC 100126 / VC-16</strain>
    </source>
</reference>
<gene>
    <name evidence="1" type="primary">rad50</name>
    <name type="ordered locus">AF_1032</name>
</gene>
<proteinExistence type="inferred from homology"/>
<accession>O29230</accession>
<sequence length="886" mass="103635">MILLKELQIKNFRSHSDSKIEFDTGINLIAGRNGAGKSSILEAILVAFYGLKPATLRKNDLVRVNSSGYSLSLTFSLNGDDYTISRKSNGESILTGKEIVEGDSNITEWVERHLCPAHVFTGAIYVRQGEIDSIIRDDESRERIIRQITRIEDYENAWKNLGAVIRMLEREKERLKEFLSQEEQIKRQKEEKKAEIERISEEIKSIESLREKLSEEVRNLESRLKELEEHKSRLESLRKQESSVLQEVRGLEEKLRELEKQLKEVVERIEDLEKKAKEVKELKPKAERYSILEKLLSEINQALRDVEKREGDLTREAAGIQAQLKKAEEDNSKLEEITKRIEELERELERFEKSHRLLETLKPKMDRMQGIKAKLEEKNLTPDKVEKMYDLLSKAKEEEKEITEKLKKLIAKKSSLKTRGAQLKKAVEELKSAERTCPVCGRELDEEHRKNIMAEYTREMKRIAEELAKADEIEKKLKERLEKVEKALEKQETVLKYRQMVDELKALENELSSHDAEKLSAESEEYRKVKERLDGLRGQQKILLSSASRIKELKSSLREIEEALKNVESERGELHRKIREEGFESLEELEREVQSLRPFYNKWLELKDAESRLESELKRREKLEDEISEAIAKLEEANGKAEEIRGQIDELLRIYSEEEHRRLSDEHLRKSKELAGLKSRLETLRESLQSAEKDLKFLEEQLAKMDEYRKKVEVFEKIAIPELTRIREKFRKYRNLVAENSMREVERYASQIFEELTEGKYSGVRLKKTTERGKEKLKVFVVYQGEEREIGFLSGGEIIALGLAFRLALSMFMIRGKIPLLILDEPTPFLDEERRRKLVDITTNYLRKIPQVIIVSHDEELKDAADKVIFVESQGGVSRVRYVEAQ</sequence>
<organism>
    <name type="scientific">Archaeoglobus fulgidus (strain ATCC 49558 / DSM 4304 / JCM 9628 / NBRC 100126 / VC-16)</name>
    <dbReference type="NCBI Taxonomy" id="224325"/>
    <lineage>
        <taxon>Archaea</taxon>
        <taxon>Methanobacteriati</taxon>
        <taxon>Methanobacteriota</taxon>
        <taxon>Archaeoglobi</taxon>
        <taxon>Archaeoglobales</taxon>
        <taxon>Archaeoglobaceae</taxon>
        <taxon>Archaeoglobus</taxon>
    </lineage>
</organism>
<name>RAD50_ARCFU</name>